<accession>Q9C7I9</accession>
<accession>Q5IRX2</accession>
<name>ARFT_ARATH</name>
<protein>
    <recommendedName>
        <fullName>Auxin response factor 20</fullName>
    </recommendedName>
</protein>
<keyword id="KW-0927">Auxin signaling pathway</keyword>
<keyword id="KW-0238">DNA-binding</keyword>
<keyword id="KW-0539">Nucleus</keyword>
<keyword id="KW-1185">Reference proteome</keyword>
<keyword id="KW-0804">Transcription</keyword>
<keyword id="KW-0805">Transcription regulation</keyword>
<proteinExistence type="evidence at transcript level"/>
<evidence type="ECO:0000250" key="1"/>
<evidence type="ECO:0000255" key="2">
    <source>
        <dbReference type="PROSITE-ProRule" id="PRU00326"/>
    </source>
</evidence>
<evidence type="ECO:0000255" key="3">
    <source>
        <dbReference type="PROSITE-ProRule" id="PRU01081"/>
    </source>
</evidence>
<evidence type="ECO:0000269" key="4">
    <source>
    </source>
</evidence>
<evidence type="ECO:0000305" key="5"/>
<comment type="function">
    <text evidence="4">Auxin response factors (ARFs) are transcriptional factors that bind specifically to the DNA sequence 5'-TGTCTC-3' found in the auxin-responsive promoter elements (AuxREs). Could act as transcriptional activator or repressor. Formation of heterodimers with Aux/IAA proteins may alter their ability to modulate early auxin response genes expression.</text>
</comment>
<comment type="subunit">
    <text evidence="1">Homodimers and heterodimers.</text>
</comment>
<comment type="subcellular location">
    <subcellularLocation>
        <location>Nucleus</location>
    </subcellularLocation>
</comment>
<comment type="domain">
    <text>Interactions between auxin response factors (ARFs) and Aux/IAA proteins occur through their C-terminal dimerization domains III and IV.</text>
</comment>
<comment type="similarity">
    <text evidence="5">Belongs to the ARF family.</text>
</comment>
<comment type="sequence caution" evidence="5">
    <conflict type="erroneous gene model prediction">
        <sequence resource="EMBL-CDS" id="AAG51458"/>
    </conflict>
</comment>
<dbReference type="EMBL" id="AY669795">
    <property type="protein sequence ID" value="AAT67079.1"/>
    <property type="molecule type" value="mRNA"/>
</dbReference>
<dbReference type="EMBL" id="AC069160">
    <property type="protein sequence ID" value="AAG51458.1"/>
    <property type="status" value="ALT_SEQ"/>
    <property type="molecule type" value="Genomic_DNA"/>
</dbReference>
<dbReference type="EMBL" id="CP002684">
    <property type="status" value="NOT_ANNOTATED_CDS"/>
    <property type="molecule type" value="Genomic_DNA"/>
</dbReference>
<dbReference type="PIR" id="D86473">
    <property type="entry name" value="D86473"/>
</dbReference>
<dbReference type="SMR" id="Q9C7I9"/>
<dbReference type="BioGRID" id="25645">
    <property type="interactions" value="12"/>
</dbReference>
<dbReference type="IntAct" id="Q9C7I9">
    <property type="interactions" value="10"/>
</dbReference>
<dbReference type="STRING" id="3702.Q9C7I9"/>
<dbReference type="PaxDb" id="3702-AT1G35240.1"/>
<dbReference type="ProteomicsDB" id="246492"/>
<dbReference type="Araport" id="AT1G35240"/>
<dbReference type="TAIR" id="AT1G35240">
    <property type="gene designation" value="ARF20"/>
</dbReference>
<dbReference type="eggNOG" id="ENOG502QTME">
    <property type="taxonomic scope" value="Eukaryota"/>
</dbReference>
<dbReference type="HOGENOM" id="CLU_002626_4_4_1"/>
<dbReference type="InParanoid" id="Q9C7I9"/>
<dbReference type="PhylomeDB" id="Q9C7I9"/>
<dbReference type="PRO" id="PR:Q9C7I9"/>
<dbReference type="Proteomes" id="UP000006548">
    <property type="component" value="Chromosome 1"/>
</dbReference>
<dbReference type="ExpressionAtlas" id="Q9C7I9">
    <property type="expression patterns" value="baseline and differential"/>
</dbReference>
<dbReference type="GO" id="GO:0005634">
    <property type="term" value="C:nucleus"/>
    <property type="evidence" value="ECO:0007669"/>
    <property type="project" value="UniProtKB-SubCell"/>
</dbReference>
<dbReference type="GO" id="GO:0003677">
    <property type="term" value="F:DNA binding"/>
    <property type="evidence" value="ECO:0007669"/>
    <property type="project" value="UniProtKB-KW"/>
</dbReference>
<dbReference type="GO" id="GO:0003700">
    <property type="term" value="F:DNA-binding transcription factor activity"/>
    <property type="evidence" value="ECO:0000250"/>
    <property type="project" value="TAIR"/>
</dbReference>
<dbReference type="GO" id="GO:0009734">
    <property type="term" value="P:auxin-activated signaling pathway"/>
    <property type="evidence" value="ECO:0007669"/>
    <property type="project" value="UniProtKB-KW"/>
</dbReference>
<dbReference type="GO" id="GO:0006355">
    <property type="term" value="P:regulation of DNA-templated transcription"/>
    <property type="evidence" value="ECO:0000304"/>
    <property type="project" value="TAIR"/>
</dbReference>
<dbReference type="CDD" id="cd10017">
    <property type="entry name" value="B3_DNA"/>
    <property type="match status" value="1"/>
</dbReference>
<dbReference type="FunFam" id="2.30.30.1040:FF:000001">
    <property type="entry name" value="Auxin response factor"/>
    <property type="match status" value="1"/>
</dbReference>
<dbReference type="FunFam" id="2.40.330.10:FF:000001">
    <property type="entry name" value="Auxin response factor"/>
    <property type="match status" value="1"/>
</dbReference>
<dbReference type="FunFam" id="3.10.20.90:FF:000047">
    <property type="entry name" value="Auxin response factor"/>
    <property type="match status" value="1"/>
</dbReference>
<dbReference type="Gene3D" id="2.30.30.1040">
    <property type="match status" value="1"/>
</dbReference>
<dbReference type="Gene3D" id="2.40.330.10">
    <property type="entry name" value="DNA-binding pseudobarrel domain"/>
    <property type="match status" value="1"/>
</dbReference>
<dbReference type="Gene3D" id="3.10.20.90">
    <property type="entry name" value="Phosphatidylinositol 3-kinase Catalytic Subunit, Chain A, domain 1"/>
    <property type="match status" value="1"/>
</dbReference>
<dbReference type="InterPro" id="IPR010525">
    <property type="entry name" value="ARF_dom"/>
</dbReference>
<dbReference type="InterPro" id="IPR044835">
    <property type="entry name" value="ARF_plant"/>
</dbReference>
<dbReference type="InterPro" id="IPR033389">
    <property type="entry name" value="AUX/IAA_dom"/>
</dbReference>
<dbReference type="InterPro" id="IPR003340">
    <property type="entry name" value="B3_DNA-bd"/>
</dbReference>
<dbReference type="InterPro" id="IPR015300">
    <property type="entry name" value="DNA-bd_pseudobarrel_sf"/>
</dbReference>
<dbReference type="InterPro" id="IPR053793">
    <property type="entry name" value="PB1-like"/>
</dbReference>
<dbReference type="PANTHER" id="PTHR31384:SF164">
    <property type="entry name" value="AUXIN RESPONSE FACTOR 12-RELATED"/>
    <property type="match status" value="1"/>
</dbReference>
<dbReference type="PANTHER" id="PTHR31384">
    <property type="entry name" value="AUXIN RESPONSE FACTOR 4-RELATED"/>
    <property type="match status" value="1"/>
</dbReference>
<dbReference type="Pfam" id="PF06507">
    <property type="entry name" value="ARF_AD"/>
    <property type="match status" value="1"/>
</dbReference>
<dbReference type="Pfam" id="PF02309">
    <property type="entry name" value="AUX_IAA"/>
    <property type="match status" value="1"/>
</dbReference>
<dbReference type="Pfam" id="PF02362">
    <property type="entry name" value="B3"/>
    <property type="match status" value="1"/>
</dbReference>
<dbReference type="SMART" id="SM01019">
    <property type="entry name" value="B3"/>
    <property type="match status" value="1"/>
</dbReference>
<dbReference type="SUPFAM" id="SSF54277">
    <property type="entry name" value="CAD &amp; PB1 domains"/>
    <property type="match status" value="1"/>
</dbReference>
<dbReference type="SUPFAM" id="SSF101936">
    <property type="entry name" value="DNA-binding pseudobarrel domain"/>
    <property type="match status" value="1"/>
</dbReference>
<dbReference type="PROSITE" id="PS50863">
    <property type="entry name" value="B3"/>
    <property type="match status" value="1"/>
</dbReference>
<dbReference type="PROSITE" id="PS51745">
    <property type="entry name" value="PB1"/>
    <property type="match status" value="1"/>
</dbReference>
<sequence length="590" mass="66970">METGNVVNAQPELSGIIDGSKSYMYEQLWKLCAGPLCDIPKLGENVYYFPQGNIELVDASTREELNELQPICDLPSKLQCRVIAIHLKVENNSDETYAEITLMPDTTQVVIPTQSENQFRPLVNSFTKVLTASDTSAYGGFFVPKKHAIECLPPLPLPAQELLAKDLHGNQWRFRHSYRGTPQRHSLTTGWNEFTTSKKLVKGDVIVFVRGETGELRVGIRRARHQQGNIPSSIVSIDCMRHGVIASAKHALDNQCIFIVVYKPSIRSSQFIVSYDKFLDAMNNKFIVGSRFTMRFEGDDFSERRYFGTIIGVNDFSPHWKCSEWRSLEVQWDEFASFSRPNKVSPWEIEHLMSALNVPRSSLLKNKRLREVNEFGQEIGQLSVASPMNTSLRYRDTTEDAMNPSRLLMSYPVQPMPKLNYNNQMVTQIEENITTKAVTNFRLFGVSLAIPLVIKDPIEEIGSDISKLTEGKKFGQSQTLRSPIEIQSKQFGSTRTCTKVQMQGVTIGRAVDLSVLNGYDQLILELEKLFDLKGQLQTRNQWKIAFTDSDGYEMLVGDDPWPEFCKMVKKILIYSKEEVKNLKSSKSLSS</sequence>
<gene>
    <name type="primary">ARF20</name>
    <name type="ordered locus">At1g35240</name>
    <name type="ORF">T9I1.3</name>
</gene>
<reference key="1">
    <citation type="journal article" date="2005" name="Plant Cell">
        <title>Functional genomic analysis of the AUXIN RESPONSE FACTOR gene family members in Arabidopsis thaliana: unique and overlapping functions of ARF7 and ARF19.</title>
        <authorList>
            <person name="Okushima Y."/>
            <person name="Overvoorde P.J."/>
            <person name="Arima K."/>
            <person name="Alonso J.M."/>
            <person name="Chan A."/>
            <person name="Chang C."/>
            <person name="Ecker J.R."/>
            <person name="Hughes B."/>
            <person name="Lui A."/>
            <person name="Nguyen D."/>
            <person name="Onodera C."/>
            <person name="Quach H."/>
            <person name="Smith A."/>
            <person name="Yu G."/>
            <person name="Theologis A."/>
        </authorList>
    </citation>
    <scope>NUCLEOTIDE SEQUENCE [MRNA]</scope>
    <source>
        <strain>cv. Columbia</strain>
    </source>
</reference>
<reference key="2">
    <citation type="journal article" date="2000" name="Nature">
        <title>Sequence and analysis of chromosome 1 of the plant Arabidopsis thaliana.</title>
        <authorList>
            <person name="Theologis A."/>
            <person name="Ecker J.R."/>
            <person name="Palm C.J."/>
            <person name="Federspiel N.A."/>
            <person name="Kaul S."/>
            <person name="White O."/>
            <person name="Alonso J."/>
            <person name="Altafi H."/>
            <person name="Araujo R."/>
            <person name="Bowman C.L."/>
            <person name="Brooks S.Y."/>
            <person name="Buehler E."/>
            <person name="Chan A."/>
            <person name="Chao Q."/>
            <person name="Chen H."/>
            <person name="Cheuk R.F."/>
            <person name="Chin C.W."/>
            <person name="Chung M.K."/>
            <person name="Conn L."/>
            <person name="Conway A.B."/>
            <person name="Conway A.R."/>
            <person name="Creasy T.H."/>
            <person name="Dewar K."/>
            <person name="Dunn P."/>
            <person name="Etgu P."/>
            <person name="Feldblyum T.V."/>
            <person name="Feng J.-D."/>
            <person name="Fong B."/>
            <person name="Fujii C.Y."/>
            <person name="Gill J.E."/>
            <person name="Goldsmith A.D."/>
            <person name="Haas B."/>
            <person name="Hansen N.F."/>
            <person name="Hughes B."/>
            <person name="Huizar L."/>
            <person name="Hunter J.L."/>
            <person name="Jenkins J."/>
            <person name="Johnson-Hopson C."/>
            <person name="Khan S."/>
            <person name="Khaykin E."/>
            <person name="Kim C.J."/>
            <person name="Koo H.L."/>
            <person name="Kremenetskaia I."/>
            <person name="Kurtz D.B."/>
            <person name="Kwan A."/>
            <person name="Lam B."/>
            <person name="Langin-Hooper S."/>
            <person name="Lee A."/>
            <person name="Lee J.M."/>
            <person name="Lenz C.A."/>
            <person name="Li J.H."/>
            <person name="Li Y.-P."/>
            <person name="Lin X."/>
            <person name="Liu S.X."/>
            <person name="Liu Z.A."/>
            <person name="Luros J.S."/>
            <person name="Maiti R."/>
            <person name="Marziali A."/>
            <person name="Militscher J."/>
            <person name="Miranda M."/>
            <person name="Nguyen M."/>
            <person name="Nierman W.C."/>
            <person name="Osborne B.I."/>
            <person name="Pai G."/>
            <person name="Peterson J."/>
            <person name="Pham P.K."/>
            <person name="Rizzo M."/>
            <person name="Rooney T."/>
            <person name="Rowley D."/>
            <person name="Sakano H."/>
            <person name="Salzberg S.L."/>
            <person name="Schwartz J.R."/>
            <person name="Shinn P."/>
            <person name="Southwick A.M."/>
            <person name="Sun H."/>
            <person name="Tallon L.J."/>
            <person name="Tambunga G."/>
            <person name="Toriumi M.J."/>
            <person name="Town C.D."/>
            <person name="Utterback T."/>
            <person name="Van Aken S."/>
            <person name="Vaysberg M."/>
            <person name="Vysotskaia V.S."/>
            <person name="Walker M."/>
            <person name="Wu D."/>
            <person name="Yu G."/>
            <person name="Fraser C.M."/>
            <person name="Venter J.C."/>
            <person name="Davis R.W."/>
        </authorList>
    </citation>
    <scope>NUCLEOTIDE SEQUENCE [LARGE SCALE GENOMIC DNA]</scope>
    <source>
        <strain>cv. Columbia</strain>
    </source>
</reference>
<reference key="3">
    <citation type="journal article" date="2017" name="Plant J.">
        <title>Araport11: a complete reannotation of the Arabidopsis thaliana reference genome.</title>
        <authorList>
            <person name="Cheng C.Y."/>
            <person name="Krishnakumar V."/>
            <person name="Chan A.P."/>
            <person name="Thibaud-Nissen F."/>
            <person name="Schobel S."/>
            <person name="Town C.D."/>
        </authorList>
    </citation>
    <scope>GENOME REANNOTATION</scope>
    <source>
        <strain>cv. Columbia</strain>
    </source>
</reference>
<reference key="4">
    <citation type="journal article" date="2002" name="Plant Mol. Biol.">
        <title>Auxin-responsive gene expression: genes, promoters and regulatory factors.</title>
        <authorList>
            <person name="Hagen G."/>
            <person name="Guilfoyle T.J."/>
        </authorList>
    </citation>
    <scope>GENE FAMILY</scope>
    <scope>NOMENCLATURE</scope>
    <scope>FUNCTION</scope>
</reference>
<reference key="5">
    <citation type="journal article" date="2008" name="Trends Plant Sci.">
        <title>The plant B3 superfamily.</title>
        <authorList>
            <person name="Swaminathan K."/>
            <person name="Peterson K."/>
            <person name="Jack T."/>
        </authorList>
    </citation>
    <scope>GENE FAMILY</scope>
</reference>
<feature type="chain" id="PRO_0000111524" description="Auxin response factor 20">
    <location>
        <begin position="1"/>
        <end position="590"/>
    </location>
</feature>
<feature type="domain" description="PB1" evidence="3">
    <location>
        <begin position="495"/>
        <end position="576"/>
    </location>
</feature>
<feature type="DNA-binding region" description="TF-B3" evidence="2">
    <location>
        <begin position="126"/>
        <end position="224"/>
    </location>
</feature>
<organism>
    <name type="scientific">Arabidopsis thaliana</name>
    <name type="common">Mouse-ear cress</name>
    <dbReference type="NCBI Taxonomy" id="3702"/>
    <lineage>
        <taxon>Eukaryota</taxon>
        <taxon>Viridiplantae</taxon>
        <taxon>Streptophyta</taxon>
        <taxon>Embryophyta</taxon>
        <taxon>Tracheophyta</taxon>
        <taxon>Spermatophyta</taxon>
        <taxon>Magnoliopsida</taxon>
        <taxon>eudicotyledons</taxon>
        <taxon>Gunneridae</taxon>
        <taxon>Pentapetalae</taxon>
        <taxon>rosids</taxon>
        <taxon>malvids</taxon>
        <taxon>Brassicales</taxon>
        <taxon>Brassicaceae</taxon>
        <taxon>Camelineae</taxon>
        <taxon>Arabidopsis</taxon>
    </lineage>
</organism>